<sequence>MISKPDKNKTRQRRHARVRGKISGTAERPRLNVYRSNKNIYAQVIDDVEGVTLASASTLDSEVKGNNKTEKAASVGEVVAKRAAEKKIVDVVFDRGGYLYHGRVQALAEAARENGLKF</sequence>
<gene>
    <name evidence="1" type="primary">rplR</name>
    <name type="ordered locus">lp_1052</name>
</gene>
<reference key="1">
    <citation type="journal article" date="2003" name="Proc. Natl. Acad. Sci. U.S.A.">
        <title>Complete genome sequence of Lactobacillus plantarum WCFS1.</title>
        <authorList>
            <person name="Kleerebezem M."/>
            <person name="Boekhorst J."/>
            <person name="van Kranenburg R."/>
            <person name="Molenaar D."/>
            <person name="Kuipers O.P."/>
            <person name="Leer R."/>
            <person name="Tarchini R."/>
            <person name="Peters S.A."/>
            <person name="Sandbrink H.M."/>
            <person name="Fiers M.W.E.J."/>
            <person name="Stiekema W."/>
            <person name="Klein Lankhorst R.M."/>
            <person name="Bron P.A."/>
            <person name="Hoffer S.M."/>
            <person name="Nierop Groot M.N."/>
            <person name="Kerkhoven R."/>
            <person name="De Vries M."/>
            <person name="Ursing B."/>
            <person name="De Vos W.M."/>
            <person name="Siezen R.J."/>
        </authorList>
    </citation>
    <scope>NUCLEOTIDE SEQUENCE [LARGE SCALE GENOMIC DNA]</scope>
    <source>
        <strain>ATCC BAA-793 / NCIMB 8826 / WCFS1</strain>
    </source>
</reference>
<reference key="2">
    <citation type="journal article" date="2012" name="J. Bacteriol.">
        <title>Complete resequencing and reannotation of the Lactobacillus plantarum WCFS1 genome.</title>
        <authorList>
            <person name="Siezen R.J."/>
            <person name="Francke C."/>
            <person name="Renckens B."/>
            <person name="Boekhorst J."/>
            <person name="Wels M."/>
            <person name="Kleerebezem M."/>
            <person name="van Hijum S.A."/>
        </authorList>
    </citation>
    <scope>NUCLEOTIDE SEQUENCE [LARGE SCALE GENOMIC DNA]</scope>
    <scope>GENOME REANNOTATION</scope>
    <source>
        <strain>ATCC BAA-793 / NCIMB 8826 / WCFS1</strain>
    </source>
</reference>
<comment type="function">
    <text evidence="1">This is one of the proteins that bind and probably mediate the attachment of the 5S RNA into the large ribosomal subunit, where it forms part of the central protuberance.</text>
</comment>
<comment type="subunit">
    <text evidence="1">Part of the 50S ribosomal subunit; part of the 5S rRNA/L5/L18/L25 subcomplex. Contacts the 5S and 23S rRNAs.</text>
</comment>
<comment type="similarity">
    <text evidence="1">Belongs to the universal ribosomal protein uL18 family.</text>
</comment>
<accession>Q88XX0</accession>
<accession>F9UMM1</accession>
<protein>
    <recommendedName>
        <fullName evidence="1">Large ribosomal subunit protein uL18</fullName>
    </recommendedName>
    <alternativeName>
        <fullName evidence="3">50S ribosomal protein L18</fullName>
    </alternativeName>
</protein>
<proteinExistence type="inferred from homology"/>
<keyword id="KW-1185">Reference proteome</keyword>
<keyword id="KW-0687">Ribonucleoprotein</keyword>
<keyword id="KW-0689">Ribosomal protein</keyword>
<keyword id="KW-0694">RNA-binding</keyword>
<keyword id="KW-0699">rRNA-binding</keyword>
<organism>
    <name type="scientific">Lactiplantibacillus plantarum (strain ATCC BAA-793 / NCIMB 8826 / WCFS1)</name>
    <name type="common">Lactobacillus plantarum</name>
    <dbReference type="NCBI Taxonomy" id="220668"/>
    <lineage>
        <taxon>Bacteria</taxon>
        <taxon>Bacillati</taxon>
        <taxon>Bacillota</taxon>
        <taxon>Bacilli</taxon>
        <taxon>Lactobacillales</taxon>
        <taxon>Lactobacillaceae</taxon>
        <taxon>Lactiplantibacillus</taxon>
    </lineage>
</organism>
<dbReference type="EMBL" id="AL935263">
    <property type="protein sequence ID" value="CCC78460.1"/>
    <property type="molecule type" value="Genomic_DNA"/>
</dbReference>
<dbReference type="RefSeq" id="YP_004888974.1">
    <property type="nucleotide sequence ID" value="NC_004567.2"/>
</dbReference>
<dbReference type="SMR" id="Q88XX0"/>
<dbReference type="STRING" id="220668.lp_1052"/>
<dbReference type="EnsemblBacteria" id="CCC78460">
    <property type="protein sequence ID" value="CCC78460"/>
    <property type="gene ID" value="lp_1052"/>
</dbReference>
<dbReference type="KEGG" id="lpl:lp_1052"/>
<dbReference type="PATRIC" id="fig|220668.9.peg.887"/>
<dbReference type="eggNOG" id="COG0256">
    <property type="taxonomic scope" value="Bacteria"/>
</dbReference>
<dbReference type="HOGENOM" id="CLU_098841_0_1_9"/>
<dbReference type="OrthoDB" id="9810939at2"/>
<dbReference type="PhylomeDB" id="Q88XX0"/>
<dbReference type="Proteomes" id="UP000000432">
    <property type="component" value="Chromosome"/>
</dbReference>
<dbReference type="GO" id="GO:0022625">
    <property type="term" value="C:cytosolic large ribosomal subunit"/>
    <property type="evidence" value="ECO:0007669"/>
    <property type="project" value="TreeGrafter"/>
</dbReference>
<dbReference type="GO" id="GO:0008097">
    <property type="term" value="F:5S rRNA binding"/>
    <property type="evidence" value="ECO:0007669"/>
    <property type="project" value="TreeGrafter"/>
</dbReference>
<dbReference type="GO" id="GO:0003735">
    <property type="term" value="F:structural constituent of ribosome"/>
    <property type="evidence" value="ECO:0007669"/>
    <property type="project" value="InterPro"/>
</dbReference>
<dbReference type="GO" id="GO:0006412">
    <property type="term" value="P:translation"/>
    <property type="evidence" value="ECO:0007669"/>
    <property type="project" value="UniProtKB-UniRule"/>
</dbReference>
<dbReference type="CDD" id="cd00432">
    <property type="entry name" value="Ribosomal_L18_L5e"/>
    <property type="match status" value="1"/>
</dbReference>
<dbReference type="FunFam" id="3.30.420.100:FF:000001">
    <property type="entry name" value="50S ribosomal protein L18"/>
    <property type="match status" value="1"/>
</dbReference>
<dbReference type="Gene3D" id="3.30.420.100">
    <property type="match status" value="1"/>
</dbReference>
<dbReference type="HAMAP" id="MF_01337_B">
    <property type="entry name" value="Ribosomal_uL18_B"/>
    <property type="match status" value="1"/>
</dbReference>
<dbReference type="InterPro" id="IPR004389">
    <property type="entry name" value="Ribosomal_uL18_bac-type"/>
</dbReference>
<dbReference type="InterPro" id="IPR005484">
    <property type="entry name" value="Ribosomal_uL18_bac/euk"/>
</dbReference>
<dbReference type="NCBIfam" id="TIGR00060">
    <property type="entry name" value="L18_bact"/>
    <property type="match status" value="1"/>
</dbReference>
<dbReference type="PANTHER" id="PTHR12899">
    <property type="entry name" value="39S RIBOSOMAL PROTEIN L18, MITOCHONDRIAL"/>
    <property type="match status" value="1"/>
</dbReference>
<dbReference type="PANTHER" id="PTHR12899:SF3">
    <property type="entry name" value="LARGE RIBOSOMAL SUBUNIT PROTEIN UL18M"/>
    <property type="match status" value="1"/>
</dbReference>
<dbReference type="Pfam" id="PF00861">
    <property type="entry name" value="Ribosomal_L18p"/>
    <property type="match status" value="1"/>
</dbReference>
<dbReference type="SUPFAM" id="SSF53137">
    <property type="entry name" value="Translational machinery components"/>
    <property type="match status" value="1"/>
</dbReference>
<name>RL18_LACPL</name>
<evidence type="ECO:0000255" key="1">
    <source>
        <dbReference type="HAMAP-Rule" id="MF_01337"/>
    </source>
</evidence>
<evidence type="ECO:0000256" key="2">
    <source>
        <dbReference type="SAM" id="MobiDB-lite"/>
    </source>
</evidence>
<evidence type="ECO:0000305" key="3"/>
<feature type="chain" id="PRO_0000131280" description="Large ribosomal subunit protein uL18">
    <location>
        <begin position="1"/>
        <end position="118"/>
    </location>
</feature>
<feature type="region of interest" description="Disordered" evidence="2">
    <location>
        <begin position="1"/>
        <end position="24"/>
    </location>
</feature>
<feature type="compositionally biased region" description="Basic residues" evidence="2">
    <location>
        <begin position="10"/>
        <end position="20"/>
    </location>
</feature>